<feature type="chain" id="PRO_0000364950" description="Ferredoxin--NADP reductase">
    <location>
        <begin position="1"/>
        <end position="330"/>
    </location>
</feature>
<feature type="binding site" evidence="1">
    <location>
        <position position="35"/>
    </location>
    <ligand>
        <name>FAD</name>
        <dbReference type="ChEBI" id="CHEBI:57692"/>
    </ligand>
</feature>
<feature type="binding site" evidence="1">
    <location>
        <position position="43"/>
    </location>
    <ligand>
        <name>FAD</name>
        <dbReference type="ChEBI" id="CHEBI:57692"/>
    </ligand>
</feature>
<feature type="binding site" evidence="1">
    <location>
        <position position="48"/>
    </location>
    <ligand>
        <name>FAD</name>
        <dbReference type="ChEBI" id="CHEBI:57692"/>
    </ligand>
</feature>
<feature type="binding site" evidence="1">
    <location>
        <position position="90"/>
    </location>
    <ligand>
        <name>FAD</name>
        <dbReference type="ChEBI" id="CHEBI:57692"/>
    </ligand>
</feature>
<feature type="binding site" evidence="1">
    <location>
        <position position="123"/>
    </location>
    <ligand>
        <name>FAD</name>
        <dbReference type="ChEBI" id="CHEBI:57692"/>
    </ligand>
</feature>
<feature type="binding site" evidence="1">
    <location>
        <position position="285"/>
    </location>
    <ligand>
        <name>FAD</name>
        <dbReference type="ChEBI" id="CHEBI:57692"/>
    </ligand>
</feature>
<feature type="binding site" evidence="1">
    <location>
        <position position="326"/>
    </location>
    <ligand>
        <name>FAD</name>
        <dbReference type="ChEBI" id="CHEBI:57692"/>
    </ligand>
</feature>
<keyword id="KW-0274">FAD</keyword>
<keyword id="KW-0285">Flavoprotein</keyword>
<keyword id="KW-0521">NADP</keyword>
<keyword id="KW-0560">Oxidoreductase</keyword>
<gene>
    <name type="ordered locus">SAK_1384</name>
</gene>
<name>FENR_STRA1</name>
<reference key="1">
    <citation type="journal article" date="2005" name="Proc. Natl. Acad. Sci. U.S.A.">
        <title>Genome analysis of multiple pathogenic isolates of Streptococcus agalactiae: implications for the microbial 'pan-genome'.</title>
        <authorList>
            <person name="Tettelin H."/>
            <person name="Masignani V."/>
            <person name="Cieslewicz M.J."/>
            <person name="Donati C."/>
            <person name="Medini D."/>
            <person name="Ward N.L."/>
            <person name="Angiuoli S.V."/>
            <person name="Crabtree J."/>
            <person name="Jones A.L."/>
            <person name="Durkin A.S."/>
            <person name="DeBoy R.T."/>
            <person name="Davidsen T.M."/>
            <person name="Mora M."/>
            <person name="Scarselli M."/>
            <person name="Margarit y Ros I."/>
            <person name="Peterson J.D."/>
            <person name="Hauser C.R."/>
            <person name="Sundaram J.P."/>
            <person name="Nelson W.C."/>
            <person name="Madupu R."/>
            <person name="Brinkac L.M."/>
            <person name="Dodson R.J."/>
            <person name="Rosovitz M.J."/>
            <person name="Sullivan S.A."/>
            <person name="Daugherty S.C."/>
            <person name="Haft D.H."/>
            <person name="Selengut J."/>
            <person name="Gwinn M.L."/>
            <person name="Zhou L."/>
            <person name="Zafar N."/>
            <person name="Khouri H."/>
            <person name="Radune D."/>
            <person name="Dimitrov G."/>
            <person name="Watkins K."/>
            <person name="O'Connor K.J."/>
            <person name="Smith S."/>
            <person name="Utterback T.R."/>
            <person name="White O."/>
            <person name="Rubens C.E."/>
            <person name="Grandi G."/>
            <person name="Madoff L.C."/>
            <person name="Kasper D.L."/>
            <person name="Telford J.L."/>
            <person name="Wessels M.R."/>
            <person name="Rappuoli R."/>
            <person name="Fraser C.M."/>
        </authorList>
    </citation>
    <scope>NUCLEOTIDE SEQUENCE [LARGE SCALE GENOMIC DNA]</scope>
    <source>
        <strain>ATCC 27591 / A909 / CDC SS700</strain>
    </source>
</reference>
<proteinExistence type="inferred from homology"/>
<protein>
    <recommendedName>
        <fullName evidence="1">Ferredoxin--NADP reductase</fullName>
        <shortName evidence="1">FNR</shortName>
        <shortName evidence="1">Fd-NADP(+) reductase</shortName>
        <ecNumber evidence="1">1.18.1.2</ecNumber>
    </recommendedName>
</protein>
<organism>
    <name type="scientific">Streptococcus agalactiae serotype Ia (strain ATCC 27591 / A909 / CDC SS700)</name>
    <dbReference type="NCBI Taxonomy" id="205921"/>
    <lineage>
        <taxon>Bacteria</taxon>
        <taxon>Bacillati</taxon>
        <taxon>Bacillota</taxon>
        <taxon>Bacilli</taxon>
        <taxon>Lactobacillales</taxon>
        <taxon>Streptococcaceae</taxon>
        <taxon>Streptococcus</taxon>
    </lineage>
</organism>
<sequence length="330" mass="36387">MNKTIYDITIVGGGPVGLFAAFYAGLRGVSVKIIESLSELGGQPAILYPEKKIYDIPGYPVITGRELIDKHIEQLERFKDSIEICLKEEVLSFEKVDDVFTIQTDKDQHLSRAIVFACGNGAFAPRLLGLENEENYADNNLFYNVTKLEQFAGKHVVICGGGDSAVDWANELDKIAASVAIVHRRDAFRAHEHSVDILKASGVRILTPYVPIGLNGDSQRVSSLVVQKVKGDEVIELPLDNLIVSFGFSTSNKNLRYWNLDYKRSSINVSSLFETTQEGVYAIGDAANYPGKVELIATGYGEAPVAINQAINYIYPDRDNRVVHSTSLIK</sequence>
<comment type="catalytic activity">
    <reaction evidence="1">
        <text>2 reduced [2Fe-2S]-[ferredoxin] + NADP(+) + H(+) = 2 oxidized [2Fe-2S]-[ferredoxin] + NADPH</text>
        <dbReference type="Rhea" id="RHEA:20125"/>
        <dbReference type="Rhea" id="RHEA-COMP:10000"/>
        <dbReference type="Rhea" id="RHEA-COMP:10001"/>
        <dbReference type="ChEBI" id="CHEBI:15378"/>
        <dbReference type="ChEBI" id="CHEBI:33737"/>
        <dbReference type="ChEBI" id="CHEBI:33738"/>
        <dbReference type="ChEBI" id="CHEBI:57783"/>
        <dbReference type="ChEBI" id="CHEBI:58349"/>
        <dbReference type="EC" id="1.18.1.2"/>
    </reaction>
</comment>
<comment type="cofactor">
    <cofactor evidence="1">
        <name>FAD</name>
        <dbReference type="ChEBI" id="CHEBI:57692"/>
    </cofactor>
    <text evidence="1">Binds 1 FAD per subunit.</text>
</comment>
<comment type="subunit">
    <text evidence="1">Homodimer.</text>
</comment>
<comment type="similarity">
    <text evidence="1">Belongs to the ferredoxin--NADP reductase type 2 family.</text>
</comment>
<accession>Q3K0F9</accession>
<dbReference type="EC" id="1.18.1.2" evidence="1"/>
<dbReference type="EMBL" id="CP000114">
    <property type="protein sequence ID" value="ABA45568.1"/>
    <property type="molecule type" value="Genomic_DNA"/>
</dbReference>
<dbReference type="RefSeq" id="WP_001044158.1">
    <property type="nucleotide sequence ID" value="NC_007432.1"/>
</dbReference>
<dbReference type="SMR" id="Q3K0F9"/>
<dbReference type="KEGG" id="sak:SAK_1384"/>
<dbReference type="HOGENOM" id="CLU_031864_5_5_9"/>
<dbReference type="GO" id="GO:0004324">
    <property type="term" value="F:ferredoxin-NADP+ reductase activity"/>
    <property type="evidence" value="ECO:0007669"/>
    <property type="project" value="UniProtKB-UniRule"/>
</dbReference>
<dbReference type="GO" id="GO:0050660">
    <property type="term" value="F:flavin adenine dinucleotide binding"/>
    <property type="evidence" value="ECO:0007669"/>
    <property type="project" value="UniProtKB-UniRule"/>
</dbReference>
<dbReference type="GO" id="GO:0050661">
    <property type="term" value="F:NADP binding"/>
    <property type="evidence" value="ECO:0007669"/>
    <property type="project" value="UniProtKB-UniRule"/>
</dbReference>
<dbReference type="Gene3D" id="3.50.50.60">
    <property type="entry name" value="FAD/NAD(P)-binding domain"/>
    <property type="match status" value="2"/>
</dbReference>
<dbReference type="HAMAP" id="MF_01685">
    <property type="entry name" value="FENR2"/>
    <property type="match status" value="1"/>
</dbReference>
<dbReference type="InterPro" id="IPR036188">
    <property type="entry name" value="FAD/NAD-bd_sf"/>
</dbReference>
<dbReference type="InterPro" id="IPR023753">
    <property type="entry name" value="FAD/NAD-binding_dom"/>
</dbReference>
<dbReference type="InterPro" id="IPR022890">
    <property type="entry name" value="Fd--NADP_Rdtase_type_2"/>
</dbReference>
<dbReference type="InterPro" id="IPR050097">
    <property type="entry name" value="Ferredoxin-NADP_redctase_2"/>
</dbReference>
<dbReference type="PANTHER" id="PTHR48105">
    <property type="entry name" value="THIOREDOXIN REDUCTASE 1-RELATED-RELATED"/>
    <property type="match status" value="1"/>
</dbReference>
<dbReference type="Pfam" id="PF07992">
    <property type="entry name" value="Pyr_redox_2"/>
    <property type="match status" value="1"/>
</dbReference>
<dbReference type="PRINTS" id="PR00368">
    <property type="entry name" value="FADPNR"/>
</dbReference>
<dbReference type="PRINTS" id="PR00469">
    <property type="entry name" value="PNDRDTASEII"/>
</dbReference>
<dbReference type="SUPFAM" id="SSF51905">
    <property type="entry name" value="FAD/NAD(P)-binding domain"/>
    <property type="match status" value="1"/>
</dbReference>
<evidence type="ECO:0000255" key="1">
    <source>
        <dbReference type="HAMAP-Rule" id="MF_01685"/>
    </source>
</evidence>